<feature type="chain" id="PRO_0000281724" description="Bifunctional polymyxin resistance protein ArnA">
    <location>
        <begin position="1"/>
        <end position="660"/>
    </location>
</feature>
<feature type="region of interest" description="Formyltransferase ArnAFT">
    <location>
        <begin position="1"/>
        <end position="304"/>
    </location>
</feature>
<feature type="region of interest" description="Dehydrogenase ArnADH">
    <location>
        <begin position="314"/>
        <end position="660"/>
    </location>
</feature>
<feature type="active site" description="Proton donor; for formyltransferase activity" evidence="1">
    <location>
        <position position="104"/>
    </location>
</feature>
<feature type="active site" description="Proton acceptor; for decarboxylase activity" evidence="1">
    <location>
        <position position="434"/>
    </location>
</feature>
<feature type="active site" description="Proton donor; for decarboxylase activity" evidence="1">
    <location>
        <position position="619"/>
    </location>
</feature>
<feature type="binding site" evidence="1">
    <location>
        <begin position="86"/>
        <end position="88"/>
    </location>
    <ligand>
        <name>(6R)-10-formyltetrahydrofolate</name>
        <dbReference type="ChEBI" id="CHEBI:195366"/>
    </ligand>
</feature>
<feature type="binding site" evidence="1">
    <location>
        <position position="114"/>
    </location>
    <ligand>
        <name>(6R)-10-formyltetrahydrofolate</name>
        <dbReference type="ChEBI" id="CHEBI:195366"/>
    </ligand>
</feature>
<feature type="binding site" evidence="1">
    <location>
        <begin position="136"/>
        <end position="140"/>
    </location>
    <ligand>
        <name>(6R)-10-formyltetrahydrofolate</name>
        <dbReference type="ChEBI" id="CHEBI:195366"/>
    </ligand>
</feature>
<feature type="binding site" evidence="1">
    <location>
        <position position="347"/>
    </location>
    <ligand>
        <name>NAD(+)</name>
        <dbReference type="ChEBI" id="CHEBI:57540"/>
    </ligand>
</feature>
<feature type="binding site" evidence="1">
    <location>
        <begin position="368"/>
        <end position="369"/>
    </location>
    <ligand>
        <name>NAD(+)</name>
        <dbReference type="ChEBI" id="CHEBI:57540"/>
    </ligand>
</feature>
<feature type="binding site" evidence="1">
    <location>
        <position position="393"/>
    </location>
    <ligand>
        <name>UDP-alpha-D-glucuronate</name>
        <dbReference type="ChEBI" id="CHEBI:58052"/>
    </ligand>
</feature>
<feature type="binding site" evidence="1">
    <location>
        <position position="398"/>
    </location>
    <ligand>
        <name>UDP-alpha-D-glucuronate</name>
        <dbReference type="ChEBI" id="CHEBI:58052"/>
    </ligand>
</feature>
<feature type="binding site" evidence="1">
    <location>
        <begin position="432"/>
        <end position="433"/>
    </location>
    <ligand>
        <name>UDP-alpha-D-glucuronate</name>
        <dbReference type="ChEBI" id="CHEBI:58052"/>
    </ligand>
</feature>
<feature type="binding site" evidence="1">
    <location>
        <position position="460"/>
    </location>
    <ligand>
        <name>UDP-alpha-D-glucuronate</name>
        <dbReference type="ChEBI" id="CHEBI:58052"/>
    </ligand>
</feature>
<feature type="binding site" evidence="1">
    <location>
        <position position="492"/>
    </location>
    <ligand>
        <name>UDP-alpha-D-glucuronate</name>
        <dbReference type="ChEBI" id="CHEBI:58052"/>
    </ligand>
</feature>
<feature type="binding site" evidence="1">
    <location>
        <begin position="526"/>
        <end position="535"/>
    </location>
    <ligand>
        <name>UDP-alpha-D-glucuronate</name>
        <dbReference type="ChEBI" id="CHEBI:58052"/>
    </ligand>
</feature>
<feature type="binding site" evidence="1">
    <location>
        <position position="613"/>
    </location>
    <ligand>
        <name>UDP-alpha-D-glucuronate</name>
        <dbReference type="ChEBI" id="CHEBI:58052"/>
    </ligand>
</feature>
<feature type="site" description="Transition state stabilizer" evidence="1">
    <location>
        <position position="102"/>
    </location>
</feature>
<feature type="site" description="Raises pKa of active site His" evidence="1">
    <location>
        <position position="140"/>
    </location>
</feature>
<dbReference type="EC" id="2.1.2.13" evidence="1"/>
<dbReference type="EC" id="1.1.1.305" evidence="1"/>
<dbReference type="EMBL" id="CP000247">
    <property type="protein sequence ID" value="ABG70292.1"/>
    <property type="molecule type" value="Genomic_DNA"/>
</dbReference>
<dbReference type="RefSeq" id="WP_000860294.1">
    <property type="nucleotide sequence ID" value="NC_008253.1"/>
</dbReference>
<dbReference type="SMR" id="Q0TFI7"/>
<dbReference type="KEGG" id="ecp:ECP_2298"/>
<dbReference type="HOGENOM" id="CLU_007383_23_2_6"/>
<dbReference type="UniPathway" id="UPA00030"/>
<dbReference type="UniPathway" id="UPA00032">
    <property type="reaction ID" value="UER00492"/>
</dbReference>
<dbReference type="UniPathway" id="UPA00032">
    <property type="reaction ID" value="UER00494"/>
</dbReference>
<dbReference type="Proteomes" id="UP000009182">
    <property type="component" value="Chromosome"/>
</dbReference>
<dbReference type="GO" id="GO:0016020">
    <property type="term" value="C:membrane"/>
    <property type="evidence" value="ECO:0007669"/>
    <property type="project" value="GOC"/>
</dbReference>
<dbReference type="GO" id="GO:0016831">
    <property type="term" value="F:carboxy-lyase activity"/>
    <property type="evidence" value="ECO:0007669"/>
    <property type="project" value="InterPro"/>
</dbReference>
<dbReference type="GO" id="GO:0099619">
    <property type="term" value="F:UDP-4-amino-4-deoxy-L-arabinose formyltransferase activity"/>
    <property type="evidence" value="ECO:0007669"/>
    <property type="project" value="UniProtKB-EC"/>
</dbReference>
<dbReference type="GO" id="GO:0099618">
    <property type="term" value="F:UDP-glucuronate dehydrogenase activity"/>
    <property type="evidence" value="ECO:0007669"/>
    <property type="project" value="UniProtKB-EC"/>
</dbReference>
<dbReference type="GO" id="GO:0009245">
    <property type="term" value="P:lipid A biosynthetic process"/>
    <property type="evidence" value="ECO:0007669"/>
    <property type="project" value="UniProtKB-KW"/>
</dbReference>
<dbReference type="GO" id="GO:0009103">
    <property type="term" value="P:lipopolysaccharide biosynthetic process"/>
    <property type="evidence" value="ECO:0007669"/>
    <property type="project" value="UniProtKB-UniRule"/>
</dbReference>
<dbReference type="GO" id="GO:0046677">
    <property type="term" value="P:response to antibiotic"/>
    <property type="evidence" value="ECO:0007669"/>
    <property type="project" value="UniProtKB-KW"/>
</dbReference>
<dbReference type="CDD" id="cd08702">
    <property type="entry name" value="Arna_FMT_C"/>
    <property type="match status" value="1"/>
</dbReference>
<dbReference type="CDD" id="cd05257">
    <property type="entry name" value="Arna_like_SDR_e"/>
    <property type="match status" value="1"/>
</dbReference>
<dbReference type="CDD" id="cd08644">
    <property type="entry name" value="FMT_core_ArnA_N"/>
    <property type="match status" value="1"/>
</dbReference>
<dbReference type="FunFam" id="3.40.50.12230:FF:000002">
    <property type="entry name" value="Bifunctional polymyxin resistance protein ArnA"/>
    <property type="match status" value="1"/>
</dbReference>
<dbReference type="FunFam" id="3.40.50.720:FF:000197">
    <property type="entry name" value="Bifunctional polymyxin resistance protein ArnA"/>
    <property type="match status" value="1"/>
</dbReference>
<dbReference type="Gene3D" id="3.40.50.12230">
    <property type="match status" value="1"/>
</dbReference>
<dbReference type="Gene3D" id="3.40.50.720">
    <property type="entry name" value="NAD(P)-binding Rossmann-like Domain"/>
    <property type="match status" value="1"/>
</dbReference>
<dbReference type="HAMAP" id="MF_01166">
    <property type="entry name" value="ArnA"/>
    <property type="match status" value="1"/>
</dbReference>
<dbReference type="InterPro" id="IPR045869">
    <property type="entry name" value="Arna-like_SDR_e"/>
</dbReference>
<dbReference type="InterPro" id="IPR021168">
    <property type="entry name" value="Bifun_polymyxin_resist_ArnA"/>
</dbReference>
<dbReference type="InterPro" id="IPR001509">
    <property type="entry name" value="Epimerase_deHydtase"/>
</dbReference>
<dbReference type="InterPro" id="IPR005793">
    <property type="entry name" value="Formyl_trans_C"/>
</dbReference>
<dbReference type="InterPro" id="IPR002376">
    <property type="entry name" value="Formyl_transf_N"/>
</dbReference>
<dbReference type="InterPro" id="IPR036477">
    <property type="entry name" value="Formyl_transf_N_sf"/>
</dbReference>
<dbReference type="InterPro" id="IPR011034">
    <property type="entry name" value="Formyl_transferase-like_C_sf"/>
</dbReference>
<dbReference type="InterPro" id="IPR050177">
    <property type="entry name" value="Lipid_A_modif_metabolic_enz"/>
</dbReference>
<dbReference type="InterPro" id="IPR036291">
    <property type="entry name" value="NAD(P)-bd_dom_sf"/>
</dbReference>
<dbReference type="NCBIfam" id="NF005414">
    <property type="entry name" value="PRK06988.1"/>
    <property type="match status" value="1"/>
</dbReference>
<dbReference type="NCBIfam" id="NF005998">
    <property type="entry name" value="PRK08125.1"/>
    <property type="match status" value="1"/>
</dbReference>
<dbReference type="NCBIfam" id="NF008872">
    <property type="entry name" value="PRK11908.1"/>
    <property type="match status" value="1"/>
</dbReference>
<dbReference type="PANTHER" id="PTHR43245">
    <property type="entry name" value="BIFUNCTIONAL POLYMYXIN RESISTANCE PROTEIN ARNA"/>
    <property type="match status" value="1"/>
</dbReference>
<dbReference type="PANTHER" id="PTHR43245:SF13">
    <property type="entry name" value="UDP-D-APIOSE_UDP-D-XYLOSE SYNTHASE 2"/>
    <property type="match status" value="1"/>
</dbReference>
<dbReference type="Pfam" id="PF01370">
    <property type="entry name" value="Epimerase"/>
    <property type="match status" value="1"/>
</dbReference>
<dbReference type="Pfam" id="PF02911">
    <property type="entry name" value="Formyl_trans_C"/>
    <property type="match status" value="1"/>
</dbReference>
<dbReference type="Pfam" id="PF00551">
    <property type="entry name" value="Formyl_trans_N"/>
    <property type="match status" value="1"/>
</dbReference>
<dbReference type="PIRSF" id="PIRSF036506">
    <property type="entry name" value="Bifun_polymyxin_resist_ArnA"/>
    <property type="match status" value="1"/>
</dbReference>
<dbReference type="SUPFAM" id="SSF50486">
    <property type="entry name" value="FMT C-terminal domain-like"/>
    <property type="match status" value="1"/>
</dbReference>
<dbReference type="SUPFAM" id="SSF53328">
    <property type="entry name" value="Formyltransferase"/>
    <property type="match status" value="1"/>
</dbReference>
<dbReference type="SUPFAM" id="SSF51735">
    <property type="entry name" value="NAD(P)-binding Rossmann-fold domains"/>
    <property type="match status" value="1"/>
</dbReference>
<accession>Q0TFI7</accession>
<comment type="function">
    <text evidence="1">Bifunctional enzyme that catalyzes the oxidative decarboxylation of UDP-glucuronic acid (UDP-GlcUA) to UDP-4-keto-arabinose (UDP-Ara4O) and the addition of a formyl group to UDP-4-amino-4-deoxy-L-arabinose (UDP-L-Ara4N) to form UDP-L-4-formamido-arabinose (UDP-L-Ara4FN). The modified arabinose is attached to lipid A and is required for resistance to polymyxin and cationic antimicrobial peptides.</text>
</comment>
<comment type="catalytic activity">
    <reaction evidence="1">
        <text>UDP-alpha-D-glucuronate + NAD(+) = UDP-beta-L-threo-pentopyranos-4-ulose + CO2 + NADH</text>
        <dbReference type="Rhea" id="RHEA:24702"/>
        <dbReference type="ChEBI" id="CHEBI:16526"/>
        <dbReference type="ChEBI" id="CHEBI:57540"/>
        <dbReference type="ChEBI" id="CHEBI:57945"/>
        <dbReference type="ChEBI" id="CHEBI:58052"/>
        <dbReference type="ChEBI" id="CHEBI:58710"/>
        <dbReference type="EC" id="1.1.1.305"/>
    </reaction>
</comment>
<comment type="catalytic activity">
    <reaction evidence="1">
        <text>UDP-4-amino-4-deoxy-beta-L-arabinose + (6R)-10-formyltetrahydrofolate = UDP-4-deoxy-4-formamido-beta-L-arabinose + (6S)-5,6,7,8-tetrahydrofolate + H(+)</text>
        <dbReference type="Rhea" id="RHEA:24706"/>
        <dbReference type="ChEBI" id="CHEBI:15378"/>
        <dbReference type="ChEBI" id="CHEBI:57453"/>
        <dbReference type="ChEBI" id="CHEBI:58708"/>
        <dbReference type="ChEBI" id="CHEBI:58709"/>
        <dbReference type="ChEBI" id="CHEBI:195366"/>
        <dbReference type="EC" id="2.1.2.13"/>
    </reaction>
</comment>
<comment type="pathway">
    <text evidence="1">Nucleotide-sugar biosynthesis; UDP-4-deoxy-4-formamido-beta-L-arabinose biosynthesis; UDP-4-deoxy-4-formamido-beta-L-arabinose from UDP-alpha-D-glucuronate: step 1/3.</text>
</comment>
<comment type="pathway">
    <text evidence="1">Nucleotide-sugar biosynthesis; UDP-4-deoxy-4-formamido-beta-L-arabinose biosynthesis; UDP-4-deoxy-4-formamido-beta-L-arabinose from UDP-alpha-D-glucuronate: step 3/3.</text>
</comment>
<comment type="pathway">
    <text evidence="1">Bacterial outer membrane biogenesis; lipopolysaccharide biosynthesis.</text>
</comment>
<comment type="subunit">
    <text evidence="1">Homohexamer, formed by a dimer of trimers.</text>
</comment>
<comment type="similarity">
    <text evidence="1">In the N-terminal section; belongs to the Fmt family. UDP-L-Ara4N formyltransferase subfamily.</text>
</comment>
<comment type="similarity">
    <text evidence="1">In the C-terminal section; belongs to the NAD(P)-dependent epimerase/dehydratase family. UDP-glucuronic acid decarboxylase subfamily.</text>
</comment>
<evidence type="ECO:0000255" key="1">
    <source>
        <dbReference type="HAMAP-Rule" id="MF_01166"/>
    </source>
</evidence>
<sequence>MKTVVFAYHDMGCLGIEALLAAGYEISAIFTHTDNPGEKAFYGSVARLAAERGIPVYAPDNVNHPLWVERIAQLSPEVIFSFYYRHLICDEILQLAPRGAFNLHGSLLPKYRGRAPLNWVLVNGETETGVTLHRMVKRADAGAIVAQLRVAIAPDDIAITLHHKLCHAARQLLEQTLPAIKHGNILEIAQRENEATCFGRRTPDDSFLEWHKSASVLHNMVRAVADPWPGAFSYVGNQKFTVWSSRVHPHASKAQPGSVISVAPLLIACGDGALEIVTGQAGDGITMQGSQLAQTLGLVQGSRLNSQPACAARRRTRVLILGVNGFIGNHLTERLLCEDHYEVYGLDIGSDAISRFLNHPHFHFVEGDISIHSEWIEYHVKKCDVVLPLVAIATPIEYTRNPLRVFELDFEENLRIIRYCVKYRKRIIFPSTSEVYGMCSDKYFDEDHSNLIVGPVNKPRWIYSVSKQLLDRVIWAYGEKEGLQFTLFRPFNWMGPRLDNLNAARIGSSRAITQLILNLVEGSPIKLIDGGKQKRCFTDIRDGIEALYRIIENAGNRCDGEIINIGNPENEASIEELGEMLLASFEKHPLRHYFPPFAGFRVVESSSYYGKGYQDVEHRKPSIRNARRCLDWEPKIDMQETIDETLDFFLRTVDLTDKPL</sequence>
<proteinExistence type="inferred from homology"/>
<reference key="1">
    <citation type="journal article" date="2006" name="Mol. Microbiol.">
        <title>Role of pathogenicity island-associated integrases in the genome plasticity of uropathogenic Escherichia coli strain 536.</title>
        <authorList>
            <person name="Hochhut B."/>
            <person name="Wilde C."/>
            <person name="Balling G."/>
            <person name="Middendorf B."/>
            <person name="Dobrindt U."/>
            <person name="Brzuszkiewicz E."/>
            <person name="Gottschalk G."/>
            <person name="Carniel E."/>
            <person name="Hacker J."/>
        </authorList>
    </citation>
    <scope>NUCLEOTIDE SEQUENCE [LARGE SCALE GENOMIC DNA]</scope>
    <source>
        <strain>536 / UPEC</strain>
    </source>
</reference>
<name>ARNA_ECOL5</name>
<keyword id="KW-0046">Antibiotic resistance</keyword>
<keyword id="KW-0441">Lipid A biosynthesis</keyword>
<keyword id="KW-0444">Lipid biosynthesis</keyword>
<keyword id="KW-0443">Lipid metabolism</keyword>
<keyword id="KW-0448">Lipopolysaccharide biosynthesis</keyword>
<keyword id="KW-0511">Multifunctional enzyme</keyword>
<keyword id="KW-0520">NAD</keyword>
<keyword id="KW-0560">Oxidoreductase</keyword>
<keyword id="KW-0808">Transferase</keyword>
<organism>
    <name type="scientific">Escherichia coli O6:K15:H31 (strain 536 / UPEC)</name>
    <dbReference type="NCBI Taxonomy" id="362663"/>
    <lineage>
        <taxon>Bacteria</taxon>
        <taxon>Pseudomonadati</taxon>
        <taxon>Pseudomonadota</taxon>
        <taxon>Gammaproteobacteria</taxon>
        <taxon>Enterobacterales</taxon>
        <taxon>Enterobacteriaceae</taxon>
        <taxon>Escherichia</taxon>
    </lineage>
</organism>
<gene>
    <name evidence="1" type="primary">arnA</name>
    <name type="ordered locus">ECP_2298</name>
</gene>
<protein>
    <recommendedName>
        <fullName evidence="1">Bifunctional polymyxin resistance protein ArnA</fullName>
    </recommendedName>
    <domain>
        <recommendedName>
            <fullName evidence="1">UDP-4-amino-4-deoxy-L-arabinose formyltransferase</fullName>
            <ecNumber evidence="1">2.1.2.13</ecNumber>
        </recommendedName>
        <alternativeName>
            <fullName evidence="1">ArnAFT</fullName>
        </alternativeName>
        <alternativeName>
            <fullName evidence="1">UDP-L-Ara4N formyltransferase</fullName>
        </alternativeName>
    </domain>
    <domain>
        <recommendedName>
            <fullName evidence="1">UDP-glucuronic acid oxidase, UDP-4-keto-hexauronic acid decarboxylating</fullName>
            <ecNumber evidence="1">1.1.1.305</ecNumber>
        </recommendedName>
        <alternativeName>
            <fullName evidence="1">ArnADH</fullName>
        </alternativeName>
        <alternativeName>
            <fullName evidence="1">UDP-GlcUA decarboxylase</fullName>
        </alternativeName>
        <alternativeName>
            <fullName evidence="1">UDP-glucuronic acid dehydrogenase</fullName>
        </alternativeName>
    </domain>
</protein>